<keyword id="KW-0067">ATP-binding</keyword>
<keyword id="KW-0227">DNA damage</keyword>
<keyword id="KW-0234">DNA repair</keyword>
<keyword id="KW-0238">DNA-binding</keyword>
<keyword id="KW-0547">Nucleotide-binding</keyword>
<keyword id="KW-1185">Reference proteome</keyword>
<accession>B2GB17</accession>
<feature type="chain" id="PRO_1000093632" description="DNA mismatch repair protein MutS">
    <location>
        <begin position="1"/>
        <end position="880"/>
    </location>
</feature>
<feature type="region of interest" description="Disordered" evidence="2">
    <location>
        <begin position="790"/>
        <end position="829"/>
    </location>
</feature>
<feature type="compositionally biased region" description="Polar residues" evidence="2">
    <location>
        <begin position="818"/>
        <end position="829"/>
    </location>
</feature>
<feature type="binding site" evidence="1">
    <location>
        <begin position="605"/>
        <end position="612"/>
    </location>
    <ligand>
        <name>ATP</name>
        <dbReference type="ChEBI" id="CHEBI:30616"/>
    </ligand>
</feature>
<sequence length="880" mass="98482">MASKQTPMMEQYQRVKDQYPDAFLFYRLGDFYEMFNEDAVKGAQLLELTLTSRSKSKDNSIPMCGVPHRAVDNYVDILIDKGYKVAICEQMEDPKTTKGMVKREVTRLVTPGTTMDLAGDAARQNNYLTALKQEQGGYNLAYADLSTGELKVTKVSNEAAAINELVNLQTREVVTEPEVSASLLDQLTKRNILRSTQGQVVNQAEVAYLSQDLTDAGQRDVVALLVSYLLTTQKRSLAHLQRAVAYQLSSFMKIDHRSKVNLELTTNLRSGKRQGTLAWLLDETKTAMGSRLLKQWLDRPLLDQAKIERRYDRVQELLDHYFERQNLQEELIKVYDLERLAGRVAYGSVNGRDLIQLKTSLEQVPKIKYILQTLDVPAFDDLEQALDPLEDVAGLIDRAIAPEPPISVTDGGVIRDGYNHQLDEYRGAMQNGKQWIADLQEQERRATGINNLKIGYNHVFGYYIEVTKANIDKLPADRYERKQTLVNAERFATPELKEKESLILGAQDKSTALEYELFVKVREAVKEQIDRLQKLAANLAALDVIQAFAKVAEDYHFVRPSLNHDHQLQIEDGRHPVVEKFMGHQEYVPNDVLMGGDTSILLITGPNMSGKSTYMRQLALTAVMAQMGCFVPAKRAQLPIFDQIFTRIGAADDLVSGESTFMVEMMEANNALQNATADSLILFDEIGRGTATYDGMALAQAIIEFVHNRVGAKTLFSTHYHELTALEGELDHLQNVHVGATEENGELVFLHKVTPGPADKSYGIHVAKLAGMPTPLLTRANQILTSLEGQETAAVPSRGVEPPAPVIEPTPAKEQTPVKEQTTPLVEESSGQLELFATAPVEKKDGKADKLARQVKNLDLMSMTPMDVMNQVYKWQQNLK</sequence>
<gene>
    <name evidence="1" type="primary">mutS</name>
    <name type="ordered locus">LAF_0513</name>
</gene>
<comment type="function">
    <text evidence="1">This protein is involved in the repair of mismatches in DNA. It is possible that it carries out the mismatch recognition step. This protein has a weak ATPase activity.</text>
</comment>
<comment type="similarity">
    <text evidence="1">Belongs to the DNA mismatch repair MutS family.</text>
</comment>
<evidence type="ECO:0000255" key="1">
    <source>
        <dbReference type="HAMAP-Rule" id="MF_00096"/>
    </source>
</evidence>
<evidence type="ECO:0000256" key="2">
    <source>
        <dbReference type="SAM" id="MobiDB-lite"/>
    </source>
</evidence>
<dbReference type="EMBL" id="AP008937">
    <property type="protein sequence ID" value="BAG26849.1"/>
    <property type="molecule type" value="Genomic_DNA"/>
</dbReference>
<dbReference type="RefSeq" id="WP_012390970.1">
    <property type="nucleotide sequence ID" value="NC_010610.1"/>
</dbReference>
<dbReference type="SMR" id="B2GB17"/>
<dbReference type="KEGG" id="lfe:LAF_0513"/>
<dbReference type="eggNOG" id="COG0249">
    <property type="taxonomic scope" value="Bacteria"/>
</dbReference>
<dbReference type="HOGENOM" id="CLU_002472_1_3_9"/>
<dbReference type="Proteomes" id="UP000001697">
    <property type="component" value="Chromosome"/>
</dbReference>
<dbReference type="GO" id="GO:0005829">
    <property type="term" value="C:cytosol"/>
    <property type="evidence" value="ECO:0007669"/>
    <property type="project" value="TreeGrafter"/>
</dbReference>
<dbReference type="GO" id="GO:0005524">
    <property type="term" value="F:ATP binding"/>
    <property type="evidence" value="ECO:0007669"/>
    <property type="project" value="UniProtKB-UniRule"/>
</dbReference>
<dbReference type="GO" id="GO:0140664">
    <property type="term" value="F:ATP-dependent DNA damage sensor activity"/>
    <property type="evidence" value="ECO:0007669"/>
    <property type="project" value="InterPro"/>
</dbReference>
<dbReference type="GO" id="GO:0003684">
    <property type="term" value="F:damaged DNA binding"/>
    <property type="evidence" value="ECO:0007669"/>
    <property type="project" value="UniProtKB-UniRule"/>
</dbReference>
<dbReference type="GO" id="GO:0030983">
    <property type="term" value="F:mismatched DNA binding"/>
    <property type="evidence" value="ECO:0007669"/>
    <property type="project" value="InterPro"/>
</dbReference>
<dbReference type="GO" id="GO:0006298">
    <property type="term" value="P:mismatch repair"/>
    <property type="evidence" value="ECO:0007669"/>
    <property type="project" value="UniProtKB-UniRule"/>
</dbReference>
<dbReference type="CDD" id="cd03284">
    <property type="entry name" value="ABC_MutS1"/>
    <property type="match status" value="1"/>
</dbReference>
<dbReference type="FunFam" id="1.10.1420.10:FF:000007">
    <property type="entry name" value="DNA mismatch repair protein MutS"/>
    <property type="match status" value="1"/>
</dbReference>
<dbReference type="FunFam" id="3.40.1170.10:FF:000001">
    <property type="entry name" value="DNA mismatch repair protein MutS"/>
    <property type="match status" value="1"/>
</dbReference>
<dbReference type="FunFam" id="3.40.50.300:FF:000896">
    <property type="entry name" value="DNA mismatch repair protein MutS"/>
    <property type="match status" value="1"/>
</dbReference>
<dbReference type="Gene3D" id="1.10.1420.10">
    <property type="match status" value="2"/>
</dbReference>
<dbReference type="Gene3D" id="3.40.1170.10">
    <property type="entry name" value="DNA repair protein MutS, domain I"/>
    <property type="match status" value="1"/>
</dbReference>
<dbReference type="Gene3D" id="3.30.420.110">
    <property type="entry name" value="MutS, connector domain"/>
    <property type="match status" value="1"/>
</dbReference>
<dbReference type="Gene3D" id="3.40.50.300">
    <property type="entry name" value="P-loop containing nucleotide triphosphate hydrolases"/>
    <property type="match status" value="1"/>
</dbReference>
<dbReference type="HAMAP" id="MF_00096">
    <property type="entry name" value="MutS"/>
    <property type="match status" value="1"/>
</dbReference>
<dbReference type="InterPro" id="IPR005748">
    <property type="entry name" value="DNA_mismatch_repair_MutS"/>
</dbReference>
<dbReference type="InterPro" id="IPR007695">
    <property type="entry name" value="DNA_mismatch_repair_MutS-lik_N"/>
</dbReference>
<dbReference type="InterPro" id="IPR017261">
    <property type="entry name" value="DNA_mismatch_repair_MutS/MSH"/>
</dbReference>
<dbReference type="InterPro" id="IPR000432">
    <property type="entry name" value="DNA_mismatch_repair_MutS_C"/>
</dbReference>
<dbReference type="InterPro" id="IPR007861">
    <property type="entry name" value="DNA_mismatch_repair_MutS_clamp"/>
</dbReference>
<dbReference type="InterPro" id="IPR007696">
    <property type="entry name" value="DNA_mismatch_repair_MutS_core"/>
</dbReference>
<dbReference type="InterPro" id="IPR016151">
    <property type="entry name" value="DNA_mismatch_repair_MutS_N"/>
</dbReference>
<dbReference type="InterPro" id="IPR036187">
    <property type="entry name" value="DNA_mismatch_repair_MutS_sf"/>
</dbReference>
<dbReference type="InterPro" id="IPR007860">
    <property type="entry name" value="DNA_mmatch_repair_MutS_con_dom"/>
</dbReference>
<dbReference type="InterPro" id="IPR045076">
    <property type="entry name" value="MutS"/>
</dbReference>
<dbReference type="InterPro" id="IPR036678">
    <property type="entry name" value="MutS_con_dom_sf"/>
</dbReference>
<dbReference type="InterPro" id="IPR027417">
    <property type="entry name" value="P-loop_NTPase"/>
</dbReference>
<dbReference type="NCBIfam" id="TIGR01070">
    <property type="entry name" value="mutS1"/>
    <property type="match status" value="1"/>
</dbReference>
<dbReference type="NCBIfam" id="NF003810">
    <property type="entry name" value="PRK05399.1"/>
    <property type="match status" value="1"/>
</dbReference>
<dbReference type="PANTHER" id="PTHR11361:SF34">
    <property type="entry name" value="DNA MISMATCH REPAIR PROTEIN MSH1, MITOCHONDRIAL"/>
    <property type="match status" value="1"/>
</dbReference>
<dbReference type="PANTHER" id="PTHR11361">
    <property type="entry name" value="DNA MISMATCH REPAIR PROTEIN MUTS FAMILY MEMBER"/>
    <property type="match status" value="1"/>
</dbReference>
<dbReference type="Pfam" id="PF01624">
    <property type="entry name" value="MutS_I"/>
    <property type="match status" value="1"/>
</dbReference>
<dbReference type="Pfam" id="PF05188">
    <property type="entry name" value="MutS_II"/>
    <property type="match status" value="1"/>
</dbReference>
<dbReference type="Pfam" id="PF05192">
    <property type="entry name" value="MutS_III"/>
    <property type="match status" value="1"/>
</dbReference>
<dbReference type="Pfam" id="PF05190">
    <property type="entry name" value="MutS_IV"/>
    <property type="match status" value="1"/>
</dbReference>
<dbReference type="Pfam" id="PF00488">
    <property type="entry name" value="MutS_V"/>
    <property type="match status" value="1"/>
</dbReference>
<dbReference type="PIRSF" id="PIRSF037677">
    <property type="entry name" value="DNA_mis_repair_Msh6"/>
    <property type="match status" value="1"/>
</dbReference>
<dbReference type="SMART" id="SM00534">
    <property type="entry name" value="MUTSac"/>
    <property type="match status" value="1"/>
</dbReference>
<dbReference type="SMART" id="SM00533">
    <property type="entry name" value="MUTSd"/>
    <property type="match status" value="1"/>
</dbReference>
<dbReference type="SUPFAM" id="SSF55271">
    <property type="entry name" value="DNA repair protein MutS, domain I"/>
    <property type="match status" value="1"/>
</dbReference>
<dbReference type="SUPFAM" id="SSF53150">
    <property type="entry name" value="DNA repair protein MutS, domain II"/>
    <property type="match status" value="1"/>
</dbReference>
<dbReference type="SUPFAM" id="SSF48334">
    <property type="entry name" value="DNA repair protein MutS, domain III"/>
    <property type="match status" value="1"/>
</dbReference>
<dbReference type="SUPFAM" id="SSF52540">
    <property type="entry name" value="P-loop containing nucleoside triphosphate hydrolases"/>
    <property type="match status" value="1"/>
</dbReference>
<dbReference type="PROSITE" id="PS00486">
    <property type="entry name" value="DNA_MISMATCH_REPAIR_2"/>
    <property type="match status" value="1"/>
</dbReference>
<organism>
    <name type="scientific">Limosilactobacillus fermentum (strain NBRC 3956 / LMG 18251)</name>
    <name type="common">Lactobacillus fermentum</name>
    <dbReference type="NCBI Taxonomy" id="334390"/>
    <lineage>
        <taxon>Bacteria</taxon>
        <taxon>Bacillati</taxon>
        <taxon>Bacillota</taxon>
        <taxon>Bacilli</taxon>
        <taxon>Lactobacillales</taxon>
        <taxon>Lactobacillaceae</taxon>
        <taxon>Limosilactobacillus</taxon>
    </lineage>
</organism>
<name>MUTS_LIMF3</name>
<reference key="1">
    <citation type="journal article" date="2008" name="DNA Res.">
        <title>Comparative genome analysis of Lactobacillus reuteri and Lactobacillus fermentum reveal a genomic island for reuterin and cobalamin production.</title>
        <authorList>
            <person name="Morita H."/>
            <person name="Toh H."/>
            <person name="Fukuda S."/>
            <person name="Horikawa H."/>
            <person name="Oshima K."/>
            <person name="Suzuki T."/>
            <person name="Murakami M."/>
            <person name="Hisamatsu S."/>
            <person name="Kato Y."/>
            <person name="Takizawa T."/>
            <person name="Fukuoka H."/>
            <person name="Yoshimura T."/>
            <person name="Itoh K."/>
            <person name="O'Sullivan D.J."/>
            <person name="McKay L.L."/>
            <person name="Ohno H."/>
            <person name="Kikuchi J."/>
            <person name="Masaoka T."/>
            <person name="Hattori M."/>
        </authorList>
    </citation>
    <scope>NUCLEOTIDE SEQUENCE [LARGE SCALE GENOMIC DNA]</scope>
    <source>
        <strain>NBRC 3956 / LMG 18251</strain>
    </source>
</reference>
<proteinExistence type="inferred from homology"/>
<protein>
    <recommendedName>
        <fullName evidence="1">DNA mismatch repair protein MutS</fullName>
    </recommendedName>
</protein>